<accession>Q5B5W2</accession>
<accession>C8V5H0</accession>
<evidence type="ECO:0000250" key="1"/>
<evidence type="ECO:0000255" key="2"/>
<evidence type="ECO:0000305" key="3"/>
<keyword id="KW-0256">Endoplasmic reticulum</keyword>
<keyword id="KW-0325">Glycoprotein</keyword>
<keyword id="KW-0472">Membrane</keyword>
<keyword id="KW-1185">Reference proteome</keyword>
<keyword id="KW-0762">Sugar transport</keyword>
<keyword id="KW-0812">Transmembrane</keyword>
<keyword id="KW-1133">Transmembrane helix</keyword>
<keyword id="KW-0813">Transport</keyword>
<dbReference type="EMBL" id="AACD01000066">
    <property type="protein sequence ID" value="EAA58956.1"/>
    <property type="molecule type" value="Genomic_DNA"/>
</dbReference>
<dbReference type="EMBL" id="BN001302">
    <property type="protein sequence ID" value="CBF74771.1"/>
    <property type="molecule type" value="Genomic_DNA"/>
</dbReference>
<dbReference type="RefSeq" id="XP_661672.1">
    <property type="nucleotide sequence ID" value="XM_656580.1"/>
</dbReference>
<dbReference type="FunCoup" id="Q5B5W2">
    <property type="interactions" value="470"/>
</dbReference>
<dbReference type="STRING" id="227321.Q5B5W2"/>
<dbReference type="GlyCosmos" id="Q5B5W2">
    <property type="glycosylation" value="1 site, No reported glycans"/>
</dbReference>
<dbReference type="EnsemblFungi" id="CBF74771">
    <property type="protein sequence ID" value="CBF74771"/>
    <property type="gene ID" value="ANIA_04068"/>
</dbReference>
<dbReference type="KEGG" id="ani:ANIA_04068"/>
<dbReference type="VEuPathDB" id="FungiDB:AN4068"/>
<dbReference type="eggNOG" id="KOG1581">
    <property type="taxonomic scope" value="Eukaryota"/>
</dbReference>
<dbReference type="HOGENOM" id="CLU_036019_0_2_1"/>
<dbReference type="InParanoid" id="Q5B5W2"/>
<dbReference type="OMA" id="CGAIGQV"/>
<dbReference type="OrthoDB" id="1601at2759"/>
<dbReference type="Proteomes" id="UP000000560">
    <property type="component" value="Chromosome II"/>
</dbReference>
<dbReference type="GO" id="GO:0005789">
    <property type="term" value="C:endoplasmic reticulum membrane"/>
    <property type="evidence" value="ECO:0000318"/>
    <property type="project" value="GO_Central"/>
</dbReference>
<dbReference type="GO" id="GO:0000139">
    <property type="term" value="C:Golgi membrane"/>
    <property type="evidence" value="ECO:0000318"/>
    <property type="project" value="GO_Central"/>
</dbReference>
<dbReference type="GO" id="GO:0005459">
    <property type="term" value="F:UDP-galactose transmembrane transporter activity"/>
    <property type="evidence" value="ECO:0000318"/>
    <property type="project" value="GO_Central"/>
</dbReference>
<dbReference type="GO" id="GO:0005460">
    <property type="term" value="F:UDP-glucose transmembrane transporter activity"/>
    <property type="evidence" value="ECO:0000318"/>
    <property type="project" value="GO_Central"/>
</dbReference>
<dbReference type="GO" id="GO:0072334">
    <property type="term" value="P:UDP-galactose transmembrane transport"/>
    <property type="evidence" value="ECO:0000318"/>
    <property type="project" value="GO_Central"/>
</dbReference>
<dbReference type="GO" id="GO:0120112">
    <property type="term" value="P:UDP-glucose transmembrane transport into endoplasmic reticulum"/>
    <property type="evidence" value="ECO:0007669"/>
    <property type="project" value="EnsemblFungi"/>
</dbReference>
<dbReference type="Gene3D" id="1.10.3730.20">
    <property type="match status" value="1"/>
</dbReference>
<dbReference type="InterPro" id="IPR013657">
    <property type="entry name" value="SCL35B1-4/HUT1"/>
</dbReference>
<dbReference type="PANTHER" id="PTHR10778">
    <property type="entry name" value="SOLUTE CARRIER FAMILY 35 MEMBER B"/>
    <property type="match status" value="1"/>
</dbReference>
<dbReference type="PANTHER" id="PTHR10778:SF10">
    <property type="entry name" value="SOLUTE CARRIER FAMILY 35 MEMBER B1"/>
    <property type="match status" value="1"/>
</dbReference>
<dbReference type="Pfam" id="PF08449">
    <property type="entry name" value="UAA"/>
    <property type="match status" value="1"/>
</dbReference>
<dbReference type="SUPFAM" id="SSF103481">
    <property type="entry name" value="Multidrug resistance efflux transporter EmrE"/>
    <property type="match status" value="1"/>
</dbReference>
<gene>
    <name type="primary">hut1</name>
    <name type="ORF">AN4068</name>
</gene>
<proteinExistence type="inferred from homology"/>
<reference key="1">
    <citation type="journal article" date="2005" name="Nature">
        <title>Sequencing of Aspergillus nidulans and comparative analysis with A. fumigatus and A. oryzae.</title>
        <authorList>
            <person name="Galagan J.E."/>
            <person name="Calvo S.E."/>
            <person name="Cuomo C."/>
            <person name="Ma L.-J."/>
            <person name="Wortman J.R."/>
            <person name="Batzoglou S."/>
            <person name="Lee S.-I."/>
            <person name="Bastuerkmen M."/>
            <person name="Spevak C.C."/>
            <person name="Clutterbuck J."/>
            <person name="Kapitonov V."/>
            <person name="Jurka J."/>
            <person name="Scazzocchio C."/>
            <person name="Farman M.L."/>
            <person name="Butler J."/>
            <person name="Purcell S."/>
            <person name="Harris S."/>
            <person name="Braus G.H."/>
            <person name="Draht O."/>
            <person name="Busch S."/>
            <person name="D'Enfert C."/>
            <person name="Bouchier C."/>
            <person name="Goldman G.H."/>
            <person name="Bell-Pedersen D."/>
            <person name="Griffiths-Jones S."/>
            <person name="Doonan J.H."/>
            <person name="Yu J."/>
            <person name="Vienken K."/>
            <person name="Pain A."/>
            <person name="Freitag M."/>
            <person name="Selker E.U."/>
            <person name="Archer D.B."/>
            <person name="Penalva M.A."/>
            <person name="Oakley B.R."/>
            <person name="Momany M."/>
            <person name="Tanaka T."/>
            <person name="Kumagai T."/>
            <person name="Asai K."/>
            <person name="Machida M."/>
            <person name="Nierman W.C."/>
            <person name="Denning D.W."/>
            <person name="Caddick M.X."/>
            <person name="Hynes M."/>
            <person name="Paoletti M."/>
            <person name="Fischer R."/>
            <person name="Miller B.L."/>
            <person name="Dyer P.S."/>
            <person name="Sachs M.S."/>
            <person name="Osmani S.A."/>
            <person name="Birren B.W."/>
        </authorList>
    </citation>
    <scope>NUCLEOTIDE SEQUENCE [LARGE SCALE GENOMIC DNA]</scope>
    <source>
        <strain>FGSC A4 / ATCC 38163 / CBS 112.46 / NRRL 194 / M139</strain>
    </source>
</reference>
<reference key="2">
    <citation type="journal article" date="2009" name="Fungal Genet. Biol.">
        <title>The 2008 update of the Aspergillus nidulans genome annotation: a community effort.</title>
        <authorList>
            <person name="Wortman J.R."/>
            <person name="Gilsenan J.M."/>
            <person name="Joardar V."/>
            <person name="Deegan J."/>
            <person name="Clutterbuck J."/>
            <person name="Andersen M.R."/>
            <person name="Archer D."/>
            <person name="Bencina M."/>
            <person name="Braus G."/>
            <person name="Coutinho P."/>
            <person name="von Dohren H."/>
            <person name="Doonan J."/>
            <person name="Driessen A.J."/>
            <person name="Durek P."/>
            <person name="Espeso E."/>
            <person name="Fekete E."/>
            <person name="Flipphi M."/>
            <person name="Estrada C.G."/>
            <person name="Geysens S."/>
            <person name="Goldman G."/>
            <person name="de Groot P.W."/>
            <person name="Hansen K."/>
            <person name="Harris S.D."/>
            <person name="Heinekamp T."/>
            <person name="Helmstaedt K."/>
            <person name="Henrissat B."/>
            <person name="Hofmann G."/>
            <person name="Homan T."/>
            <person name="Horio T."/>
            <person name="Horiuchi H."/>
            <person name="James S."/>
            <person name="Jones M."/>
            <person name="Karaffa L."/>
            <person name="Karanyi Z."/>
            <person name="Kato M."/>
            <person name="Keller N."/>
            <person name="Kelly D.E."/>
            <person name="Kiel J.A."/>
            <person name="Kim J.M."/>
            <person name="van der Klei I.J."/>
            <person name="Klis F.M."/>
            <person name="Kovalchuk A."/>
            <person name="Krasevec N."/>
            <person name="Kubicek C.P."/>
            <person name="Liu B."/>
            <person name="Maccabe A."/>
            <person name="Meyer V."/>
            <person name="Mirabito P."/>
            <person name="Miskei M."/>
            <person name="Mos M."/>
            <person name="Mullins J."/>
            <person name="Nelson D.R."/>
            <person name="Nielsen J."/>
            <person name="Oakley B.R."/>
            <person name="Osmani S.A."/>
            <person name="Pakula T."/>
            <person name="Paszewski A."/>
            <person name="Paulsen I."/>
            <person name="Pilsyk S."/>
            <person name="Pocsi I."/>
            <person name="Punt P.J."/>
            <person name="Ram A.F."/>
            <person name="Ren Q."/>
            <person name="Robellet X."/>
            <person name="Robson G."/>
            <person name="Seiboth B."/>
            <person name="van Solingen P."/>
            <person name="Specht T."/>
            <person name="Sun J."/>
            <person name="Taheri-Talesh N."/>
            <person name="Takeshita N."/>
            <person name="Ussery D."/>
            <person name="vanKuyk P.A."/>
            <person name="Visser H."/>
            <person name="van de Vondervoort P.J."/>
            <person name="de Vries R.P."/>
            <person name="Walton J."/>
            <person name="Xiang X."/>
            <person name="Xiong Y."/>
            <person name="Zeng A.P."/>
            <person name="Brandt B.W."/>
            <person name="Cornell M.J."/>
            <person name="van den Hondel C.A."/>
            <person name="Visser J."/>
            <person name="Oliver S.G."/>
            <person name="Turner G."/>
        </authorList>
    </citation>
    <scope>GENOME REANNOTATION</scope>
    <source>
        <strain>FGSC A4 / ATCC 38163 / CBS 112.46 / NRRL 194 / M139</strain>
    </source>
</reference>
<sequence length="424" mass="46138">MARQKQAAPIQRATSSELMHMLPDDLPQKHHNGANMGLANKDTTRDKVHEAADAPGLWQLAFCVAGIYASFLSWGVLQEAITTVSYPVHPPTAAEPEPEKERFTFSIVLNTIQSTFAAVTGFLYLYFSTPKGEKVPSIFPTRKIIFPLVLVSISSSLASPFGYASLAHIDYLTFILAKSCKLLPVMFLHLTIFRKRYPLYKYGVVLLVTLGVATFTLHHPGTSNKVAASATKGTSGSSAWGIFLLSINLLLDGLTNTTQDHVFSSPQLYTRFSGPQMMVAQNVLSTLLTSAYLLIMPHLSSTGILHAILPVPIPPSTETELTAAVSFLSRHPEVLKSVLGFAAFGAMGQLFIFYTLSQFSSLLLVTVTVTRKMLTMLLSVFWFGHSLSAGQWLGIGLVFGGIGAEAVVQRQEKKAKAAKAKKTE</sequence>
<protein>
    <recommendedName>
        <fullName>UDP-galactose transporter homolog 1</fullName>
    </recommendedName>
</protein>
<feature type="chain" id="PRO_0000213409" description="UDP-galactose transporter homolog 1">
    <location>
        <begin position="1"/>
        <end position="424"/>
    </location>
</feature>
<feature type="transmembrane region" description="Helical" evidence="2">
    <location>
        <begin position="57"/>
        <end position="77"/>
    </location>
</feature>
<feature type="transmembrane region" description="Helical" evidence="2">
    <location>
        <begin position="107"/>
        <end position="127"/>
    </location>
</feature>
<feature type="transmembrane region" description="Helical" evidence="2">
    <location>
        <begin position="144"/>
        <end position="164"/>
    </location>
</feature>
<feature type="transmembrane region" description="Helical" evidence="2">
    <location>
        <begin position="173"/>
        <end position="193"/>
    </location>
</feature>
<feature type="transmembrane region" description="Helical" evidence="2">
    <location>
        <begin position="197"/>
        <end position="217"/>
    </location>
</feature>
<feature type="transmembrane region" description="Helical" evidence="2">
    <location>
        <begin position="234"/>
        <end position="254"/>
    </location>
</feature>
<feature type="transmembrane region" description="Helical" evidence="2">
    <location>
        <begin position="293"/>
        <end position="313"/>
    </location>
</feature>
<feature type="transmembrane region" description="Helical" evidence="2">
    <location>
        <begin position="337"/>
        <end position="357"/>
    </location>
</feature>
<feature type="transmembrane region" description="Helical" evidence="2">
    <location>
        <begin position="380"/>
        <end position="400"/>
    </location>
</feature>
<feature type="glycosylation site" description="N-linked (GlcNAc...) asparagine" evidence="2">
    <location>
        <position position="256"/>
    </location>
</feature>
<organism>
    <name type="scientific">Emericella nidulans (strain FGSC A4 / ATCC 38163 / CBS 112.46 / NRRL 194 / M139)</name>
    <name type="common">Aspergillus nidulans</name>
    <dbReference type="NCBI Taxonomy" id="227321"/>
    <lineage>
        <taxon>Eukaryota</taxon>
        <taxon>Fungi</taxon>
        <taxon>Dikarya</taxon>
        <taxon>Ascomycota</taxon>
        <taxon>Pezizomycotina</taxon>
        <taxon>Eurotiomycetes</taxon>
        <taxon>Eurotiomycetidae</taxon>
        <taxon>Eurotiales</taxon>
        <taxon>Aspergillaceae</taxon>
        <taxon>Aspergillus</taxon>
        <taxon>Aspergillus subgen. Nidulantes</taxon>
    </lineage>
</organism>
<name>HUT1_EMENI</name>
<comment type="function">
    <text evidence="1">May be involved in specific transport of UDP-Gal from the cytosol to the Golgi lumen. Involved in the maintenance of optimal conditions for the folding of secretory pathway proteins in the endoplasmic reticulum (By similarity).</text>
</comment>
<comment type="subcellular location">
    <subcellularLocation>
        <location evidence="1">Endoplasmic reticulum membrane</location>
        <topology evidence="1">Multi-pass membrane protein</topology>
    </subcellularLocation>
</comment>
<comment type="similarity">
    <text evidence="3">Belongs to the nucleotide-sugar transporter family. SLC35B subfamily.</text>
</comment>